<keyword id="KW-0472">Membrane</keyword>
<keyword id="KW-1185">Reference proteome</keyword>
<keyword id="KW-0812">Transmembrane</keyword>
<keyword id="KW-1133">Transmembrane helix</keyword>
<organism>
    <name type="scientific">Invertebrate iridescent virus 3</name>
    <name type="common">IIV-3</name>
    <name type="synonym">Mosquito iridescent virus</name>
    <dbReference type="NCBI Taxonomy" id="345201"/>
    <lineage>
        <taxon>Viruses</taxon>
        <taxon>Varidnaviria</taxon>
        <taxon>Bamfordvirae</taxon>
        <taxon>Nucleocytoviricota</taxon>
        <taxon>Megaviricetes</taxon>
        <taxon>Pimascovirales</taxon>
        <taxon>Iridoviridae</taxon>
        <taxon>Betairidovirinae</taxon>
        <taxon>Chloriridovirus</taxon>
    </lineage>
</organism>
<comment type="subcellular location">
    <subcellularLocation>
        <location evidence="2">Membrane</location>
        <topology evidence="2">Single-pass membrane protein</topology>
    </subcellularLocation>
</comment>
<comment type="similarity">
    <text evidence="2">Belongs to the IIV-6 203L/325L family.</text>
</comment>
<evidence type="ECO:0000255" key="1"/>
<evidence type="ECO:0000305" key="2"/>
<dbReference type="EMBL" id="DQ643392">
    <property type="protein sequence ID" value="ABF82115.1"/>
    <property type="molecule type" value="Genomic_DNA"/>
</dbReference>
<dbReference type="RefSeq" id="YP_654657.1">
    <property type="nucleotide sequence ID" value="NC_008187.1"/>
</dbReference>
<dbReference type="SMR" id="Q196X5"/>
<dbReference type="KEGG" id="vg:4156296"/>
<dbReference type="OrthoDB" id="17738at10239"/>
<dbReference type="Proteomes" id="UP000001358">
    <property type="component" value="Genome"/>
</dbReference>
<dbReference type="GO" id="GO:0016020">
    <property type="term" value="C:membrane"/>
    <property type="evidence" value="ECO:0007669"/>
    <property type="project" value="UniProtKB-SubCell"/>
</dbReference>
<sequence>MHLTGPTLLSLLAALLVSLGLLLWYPTKTRTKDKLLKDLNTLKINTVNLLNQVLKTDTTKLVDFHIANVHCDGIIDRLLSPDELAQLYHKDYPLYKRLVGCGYTKTVGLLHGFALWASETKTRDVSSLKYFIDCISTLDWKEPNLFAGFHTTESKVKKCIV</sequence>
<organismHost>
    <name type="scientific">Aedes vexans</name>
    <name type="common">Inland floodwater mosquito</name>
    <name type="synonym">Culex vexans</name>
    <dbReference type="NCBI Taxonomy" id="7163"/>
</organismHost>
<organismHost>
    <name type="scientific">Culex territans</name>
    <dbReference type="NCBI Taxonomy" id="42431"/>
</organismHost>
<organismHost>
    <name type="scientific">Culiseta annulata</name>
    <dbReference type="NCBI Taxonomy" id="332058"/>
</organismHost>
<organismHost>
    <name type="scientific">Ochlerotatus sollicitans</name>
    <name type="common">eastern saltmarsh mosquito</name>
    <dbReference type="NCBI Taxonomy" id="310513"/>
</organismHost>
<organismHost>
    <name type="scientific">Ochlerotatus taeniorhynchus</name>
    <name type="common">Black salt marsh mosquito</name>
    <name type="synonym">Aedes taeniorhynchus</name>
    <dbReference type="NCBI Taxonomy" id="329105"/>
</organismHost>
<organismHost>
    <name type="scientific">Psorophora ferox</name>
    <dbReference type="NCBI Taxonomy" id="7183"/>
</organismHost>
<accession>Q196X5</accession>
<feature type="chain" id="PRO_0000377934" description="Uncharacterized protein 085L">
    <location>
        <begin position="1"/>
        <end position="161"/>
    </location>
</feature>
<feature type="transmembrane region" description="Helical" evidence="1">
    <location>
        <begin position="5"/>
        <end position="25"/>
    </location>
</feature>
<name>VF203_IIV3</name>
<proteinExistence type="inferred from homology"/>
<reference key="1">
    <citation type="journal article" date="2006" name="J. Virol.">
        <title>Genome of invertebrate iridescent virus type 3 (mosquito iridescent virus).</title>
        <authorList>
            <person name="Delhon G."/>
            <person name="Tulman E.R."/>
            <person name="Afonso C.L."/>
            <person name="Lu Z."/>
            <person name="Becnel J.J."/>
            <person name="Moser B.A."/>
            <person name="Kutish G.F."/>
            <person name="Rock D.L."/>
        </authorList>
    </citation>
    <scope>NUCLEOTIDE SEQUENCE [LARGE SCALE GENOMIC DNA]</scope>
</reference>
<gene>
    <name type="ORF">IIV3-085L</name>
</gene>
<protein>
    <recommendedName>
        <fullName>Uncharacterized protein 085L</fullName>
    </recommendedName>
</protein>